<organismHost>
    <name type="scientific">Ornithodoros</name>
    <name type="common">relapsing fever ticks</name>
    <dbReference type="NCBI Taxonomy" id="6937"/>
</organismHost>
<organismHost>
    <name type="scientific">Phacochoerus aethiopicus</name>
    <name type="common">Warthog</name>
    <dbReference type="NCBI Taxonomy" id="85517"/>
</organismHost>
<organismHost>
    <name type="scientific">Phacochoerus africanus</name>
    <name type="common">Warthog</name>
    <dbReference type="NCBI Taxonomy" id="41426"/>
</organismHost>
<organismHost>
    <name type="scientific">Potamochoerus larvatus</name>
    <name type="common">Bushpig</name>
    <dbReference type="NCBI Taxonomy" id="273792"/>
</organismHost>
<organismHost>
    <name type="scientific">Sus scrofa</name>
    <name type="common">Pig</name>
    <dbReference type="NCBI Taxonomy" id="9823"/>
</organismHost>
<sequence>MLFRYLVWLFRFIKVKNVASISLLVIGSNYLTTAIANNTSISPTTSSNHITTAIPNNTSILPTTSSNHITTAISNNITDKDDYTHFSTDKTISDSLTPITLYRAIRSTLNDTGTKTMTDHGLTRPYRPTTVIFHSDTSLPVKNATRDNSIKKIYRQVISFFIQSNPLFPCFKNHEVFLNLANILNTILCIILIKNV</sequence>
<name>VF196_ASFK5</name>
<comment type="induction">
    <text evidence="1">Expressed in the late phase of the viral replicative cycle.</text>
</comment>
<comment type="similarity">
    <text evidence="1">Belongs to the asfivirus I196L family.</text>
</comment>
<organism>
    <name type="scientific">African swine fever virus (isolate Pig/Kenya/KEN-50/1950)</name>
    <name type="common">ASFV</name>
    <dbReference type="NCBI Taxonomy" id="561445"/>
    <lineage>
        <taxon>Viruses</taxon>
        <taxon>Varidnaviria</taxon>
        <taxon>Bamfordvirae</taxon>
        <taxon>Nucleocytoviricota</taxon>
        <taxon>Pokkesviricetes</taxon>
        <taxon>Asfuvirales</taxon>
        <taxon>Asfarviridae</taxon>
        <taxon>Asfivirus</taxon>
        <taxon>African swine fever virus</taxon>
    </lineage>
</organism>
<gene>
    <name type="ordered locus">Ken-157</name>
</gene>
<evidence type="ECO:0000305" key="1"/>
<dbReference type="EMBL" id="AY261360">
    <property type="status" value="NOT_ANNOTATED_CDS"/>
    <property type="molecule type" value="Genomic_DNA"/>
</dbReference>
<dbReference type="Proteomes" id="UP000000861">
    <property type="component" value="Segment"/>
</dbReference>
<keyword id="KW-0426">Late protein</keyword>
<keyword id="KW-0677">Repeat</keyword>
<reference key="1">
    <citation type="submission" date="2003-03" db="EMBL/GenBank/DDBJ databases">
        <title>African swine fever virus genomes.</title>
        <authorList>
            <person name="Kutish G.F."/>
            <person name="Rock D.L."/>
        </authorList>
    </citation>
    <scope>NUCLEOTIDE SEQUENCE [LARGE SCALE GENOMIC DNA]</scope>
</reference>
<accession>P0CA90</accession>
<feature type="chain" id="PRO_0000373577" description="Late protein I196L">
    <location>
        <begin position="1"/>
        <end position="196"/>
    </location>
</feature>
<feature type="repeat" description="1">
    <location>
        <begin position="28"/>
        <end position="48"/>
    </location>
</feature>
<feature type="repeat" description="2">
    <location>
        <begin position="49"/>
        <end position="68"/>
    </location>
</feature>
<feature type="repeat" description="3; approximate">
    <location>
        <begin position="69"/>
        <end position="87"/>
    </location>
</feature>
<proteinExistence type="inferred from homology"/>
<protein>
    <recommendedName>
        <fullName>Late protein I196L</fullName>
    </recommendedName>
</protein>